<keyword id="KW-1003">Cell membrane</keyword>
<keyword id="KW-0472">Membrane</keyword>
<keyword id="KW-0677">Repeat</keyword>
<keyword id="KW-0812">Transmembrane</keyword>
<keyword id="KW-1133">Transmembrane helix</keyword>
<keyword id="KW-0813">Transport</keyword>
<dbReference type="EMBL" id="CP000950">
    <property type="protein sequence ID" value="ACA66327.1"/>
    <property type="molecule type" value="Genomic_DNA"/>
</dbReference>
<dbReference type="RefSeq" id="WP_011193331.1">
    <property type="nucleotide sequence ID" value="NZ_CP009792.1"/>
</dbReference>
<dbReference type="SMR" id="B1JGZ7"/>
<dbReference type="KEGG" id="ypy:YPK_0013"/>
<dbReference type="PATRIC" id="fig|502800.11.peg.615"/>
<dbReference type="GO" id="GO:0005886">
    <property type="term" value="C:plasma membrane"/>
    <property type="evidence" value="ECO:0007669"/>
    <property type="project" value="UniProtKB-SubCell"/>
</dbReference>
<dbReference type="GO" id="GO:0008324">
    <property type="term" value="F:monoatomic cation transmembrane transporter activity"/>
    <property type="evidence" value="ECO:0007669"/>
    <property type="project" value="InterPro"/>
</dbReference>
<dbReference type="GO" id="GO:0006813">
    <property type="term" value="P:potassium ion transport"/>
    <property type="evidence" value="ECO:0007669"/>
    <property type="project" value="InterPro"/>
</dbReference>
<dbReference type="Gene3D" id="3.30.70.1450">
    <property type="entry name" value="Regulator of K+ conductance, C-terminal domain"/>
    <property type="match status" value="2"/>
</dbReference>
<dbReference type="HAMAP" id="MF_01016">
    <property type="entry name" value="YidE"/>
    <property type="match status" value="1"/>
</dbReference>
<dbReference type="InterPro" id="IPR050144">
    <property type="entry name" value="AAE_transporter"/>
</dbReference>
<dbReference type="InterPro" id="IPR006037">
    <property type="entry name" value="RCK_C"/>
</dbReference>
<dbReference type="InterPro" id="IPR036721">
    <property type="entry name" value="RCK_C_sf"/>
</dbReference>
<dbReference type="InterPro" id="IPR023018">
    <property type="entry name" value="Transpt_YidE_put"/>
</dbReference>
<dbReference type="InterPro" id="IPR006512">
    <property type="entry name" value="YidE_YbjL"/>
</dbReference>
<dbReference type="NCBIfam" id="NF003007">
    <property type="entry name" value="PRK03818.1"/>
    <property type="match status" value="1"/>
</dbReference>
<dbReference type="NCBIfam" id="TIGR01625">
    <property type="entry name" value="YidE_YbjL_dupl"/>
    <property type="match status" value="2"/>
</dbReference>
<dbReference type="PANTHER" id="PTHR30445">
    <property type="entry name" value="K(+)_H(+) ANTIPORTER SUBUNIT KHTT"/>
    <property type="match status" value="1"/>
</dbReference>
<dbReference type="PANTHER" id="PTHR30445:SF3">
    <property type="entry name" value="TRANSPORT PROTEIN YIDE-RELATED"/>
    <property type="match status" value="1"/>
</dbReference>
<dbReference type="Pfam" id="PF06826">
    <property type="entry name" value="Asp-Al_Ex"/>
    <property type="match status" value="2"/>
</dbReference>
<dbReference type="Pfam" id="PF02080">
    <property type="entry name" value="TrkA_C"/>
    <property type="match status" value="2"/>
</dbReference>
<dbReference type="SUPFAM" id="SSF116726">
    <property type="entry name" value="TrkA C-terminal domain-like"/>
    <property type="match status" value="2"/>
</dbReference>
<dbReference type="PROSITE" id="PS51202">
    <property type="entry name" value="RCK_C"/>
    <property type="match status" value="2"/>
</dbReference>
<accession>B1JGZ7</accession>
<reference key="1">
    <citation type="submission" date="2008-02" db="EMBL/GenBank/DDBJ databases">
        <title>Complete sequence of Yersinia pseudotuberculosis YPIII.</title>
        <authorList>
            <consortium name="US DOE Joint Genome Institute"/>
            <person name="Copeland A."/>
            <person name="Lucas S."/>
            <person name="Lapidus A."/>
            <person name="Glavina del Rio T."/>
            <person name="Dalin E."/>
            <person name="Tice H."/>
            <person name="Bruce D."/>
            <person name="Goodwin L."/>
            <person name="Pitluck S."/>
            <person name="Munk A.C."/>
            <person name="Brettin T."/>
            <person name="Detter J.C."/>
            <person name="Han C."/>
            <person name="Tapia R."/>
            <person name="Schmutz J."/>
            <person name="Larimer F."/>
            <person name="Land M."/>
            <person name="Hauser L."/>
            <person name="Challacombe J.F."/>
            <person name="Green L."/>
            <person name="Lindler L.E."/>
            <person name="Nikolich M.P."/>
            <person name="Richardson P."/>
        </authorList>
    </citation>
    <scope>NUCLEOTIDE SEQUENCE [LARGE SCALE GENOMIC DNA]</scope>
    <source>
        <strain>YPIII</strain>
    </source>
</reference>
<gene>
    <name type="ordered locus">YPK_0013</name>
</gene>
<evidence type="ECO:0000255" key="1">
    <source>
        <dbReference type="HAMAP-Rule" id="MF_01016"/>
    </source>
</evidence>
<feature type="chain" id="PRO_1000135223" description="Putative transport protein YPK_0013">
    <location>
        <begin position="1"/>
        <end position="552"/>
    </location>
</feature>
<feature type="transmembrane region" description="Helical" evidence="1">
    <location>
        <begin position="1"/>
        <end position="21"/>
    </location>
</feature>
<feature type="transmembrane region" description="Helical" evidence="1">
    <location>
        <begin position="26"/>
        <end position="46"/>
    </location>
</feature>
<feature type="transmembrane region" description="Helical" evidence="1">
    <location>
        <begin position="65"/>
        <end position="85"/>
    </location>
</feature>
<feature type="transmembrane region" description="Helical" evidence="1">
    <location>
        <begin position="96"/>
        <end position="116"/>
    </location>
</feature>
<feature type="transmembrane region" description="Helical" evidence="1">
    <location>
        <begin position="119"/>
        <end position="139"/>
    </location>
</feature>
<feature type="transmembrane region" description="Helical" evidence="1">
    <location>
        <begin position="158"/>
        <end position="178"/>
    </location>
</feature>
<feature type="transmembrane region" description="Helical" evidence="1">
    <location>
        <begin position="371"/>
        <end position="391"/>
    </location>
</feature>
<feature type="transmembrane region" description="Helical" evidence="1">
    <location>
        <begin position="393"/>
        <end position="413"/>
    </location>
</feature>
<feature type="transmembrane region" description="Helical" evidence="1">
    <location>
        <begin position="439"/>
        <end position="459"/>
    </location>
</feature>
<feature type="transmembrane region" description="Helical" evidence="1">
    <location>
        <begin position="464"/>
        <end position="484"/>
    </location>
</feature>
<feature type="transmembrane region" description="Helical" evidence="1">
    <location>
        <begin position="493"/>
        <end position="513"/>
    </location>
</feature>
<feature type="transmembrane region" description="Helical" evidence="1">
    <location>
        <begin position="530"/>
        <end position="550"/>
    </location>
</feature>
<feature type="domain" description="RCK C-terminal 1" evidence="1">
    <location>
        <begin position="192"/>
        <end position="276"/>
    </location>
</feature>
<feature type="domain" description="RCK C-terminal 2" evidence="1">
    <location>
        <begin position="279"/>
        <end position="361"/>
    </location>
</feature>
<proteinExistence type="inferred from homology"/>
<sequence>MSAIALTVSMLALVAVLGLWIGNWKIYGVGLGIGGVLFGGIIVGHFAQTYQIVLNGDMLHFIQEFGLILFVYTIGIQVGPGFFSSLRVSGLRLNCFAILMVVVGGLVTAIIHKLFAVPLPIILGVFSGAVTNTPALGAAQQILTDLGSPPQLVSQMGMGYAMAYPFGICGILLVMWLIRLFFKINIDREAKAFDSSYGQNRELLQTMNVAVRNPNLHGLSVQDVPLLNSDEVVCSRLKRGDLLMVPMPATVIEIGDYLHLVGQRDALEKVRLVVGEEVDVTLSTAGTALQTARVVVTNEAVLGKKIRDLNLKQKYDVVITRLNRAGIELVASNSANLQFGDILNLVGRPEAIEAVSAIVGNAQQKLQQVQMLPVFIGVGLGVLLGSIPLFVPGFPAALRLGLAGGPLVVALILGRIGSIGKLYWFMPPSANLALRELGIVLFLSVVGLKSGGDFINTLVNGDGLAWIGYGAMITGIPLLTVGILARMLVKMNYLTLCGMLAGSMTDPPALAFANGLHPTSGAAALSYATVYPLAMFLRIMSPQILAVLFWTL</sequence>
<protein>
    <recommendedName>
        <fullName evidence="1">Putative transport protein YPK_0013</fullName>
    </recommendedName>
</protein>
<name>Y013_YERPY</name>
<comment type="subcellular location">
    <subcellularLocation>
        <location evidence="1">Cell membrane</location>
        <topology evidence="1">Multi-pass membrane protein</topology>
    </subcellularLocation>
</comment>
<comment type="similarity">
    <text evidence="1">Belongs to the AAE transporter (TC 2.A.81) family. YidE subfamily.</text>
</comment>
<organism>
    <name type="scientific">Yersinia pseudotuberculosis serotype O:3 (strain YPIII)</name>
    <dbReference type="NCBI Taxonomy" id="502800"/>
    <lineage>
        <taxon>Bacteria</taxon>
        <taxon>Pseudomonadati</taxon>
        <taxon>Pseudomonadota</taxon>
        <taxon>Gammaproteobacteria</taxon>
        <taxon>Enterobacterales</taxon>
        <taxon>Yersiniaceae</taxon>
        <taxon>Yersinia</taxon>
    </lineage>
</organism>